<sequence length="449" mass="50049">MSLRFYNTLTRQKEAFTPIDPADVRVYACGPTVYDHLHIGNGRMLIVFDLLFRLLRHVYGKDHVRYVRNITDVDDKINARAAERGVDIRVLTDEMTAIFHEDAAGLGCLPPTVEPRATEHMAEMIAIIQKLIDKGAAYIAEGHVLFDVPAMPDYGALSKRPLDDMIAGARVEVAPYKRGPMDFVLWKPAAPSEPGWESPWGRGRPGWHIECSAMSWRHLGEVFDIHGGGIDLVFPHHENEIAQTRCAFGHSVMAHVWMHNGHLQVEGEKMSKSLGNFVTIHELLNSDSFGGRKWPGAVLRLAMLRTHYRQPIDFTVKALEEAERTLSEWRHAAEGAEPEAPDANFIDALSDDLNTPRAISELHALKAKRPGALLGGLALLGVDLADLGEEERALPRSAFEQIMALIAEREAARQHKNWAESDRLRDKLAAMGVVLKDNKGGATSWELKP</sequence>
<keyword id="KW-0030">Aminoacyl-tRNA synthetase</keyword>
<keyword id="KW-0067">ATP-binding</keyword>
<keyword id="KW-0963">Cytoplasm</keyword>
<keyword id="KW-0436">Ligase</keyword>
<keyword id="KW-0479">Metal-binding</keyword>
<keyword id="KW-0547">Nucleotide-binding</keyword>
<keyword id="KW-0648">Protein biosynthesis</keyword>
<keyword id="KW-1185">Reference proteome</keyword>
<keyword id="KW-0862">Zinc</keyword>
<accession>B8EMY2</accession>
<dbReference type="EC" id="6.1.1.16" evidence="1"/>
<dbReference type="EMBL" id="CP001280">
    <property type="protein sequence ID" value="ACK49117.1"/>
    <property type="molecule type" value="Genomic_DNA"/>
</dbReference>
<dbReference type="RefSeq" id="WP_012589187.1">
    <property type="nucleotide sequence ID" value="NC_011666.1"/>
</dbReference>
<dbReference type="SMR" id="B8EMY2"/>
<dbReference type="STRING" id="395965.Msil_0135"/>
<dbReference type="KEGG" id="msl:Msil_0135"/>
<dbReference type="eggNOG" id="COG0215">
    <property type="taxonomic scope" value="Bacteria"/>
</dbReference>
<dbReference type="HOGENOM" id="CLU_013528_0_1_5"/>
<dbReference type="OrthoDB" id="9815130at2"/>
<dbReference type="Proteomes" id="UP000002257">
    <property type="component" value="Chromosome"/>
</dbReference>
<dbReference type="GO" id="GO:0005829">
    <property type="term" value="C:cytosol"/>
    <property type="evidence" value="ECO:0007669"/>
    <property type="project" value="TreeGrafter"/>
</dbReference>
<dbReference type="GO" id="GO:0005524">
    <property type="term" value="F:ATP binding"/>
    <property type="evidence" value="ECO:0007669"/>
    <property type="project" value="UniProtKB-UniRule"/>
</dbReference>
<dbReference type="GO" id="GO:0004817">
    <property type="term" value="F:cysteine-tRNA ligase activity"/>
    <property type="evidence" value="ECO:0007669"/>
    <property type="project" value="UniProtKB-UniRule"/>
</dbReference>
<dbReference type="GO" id="GO:0008270">
    <property type="term" value="F:zinc ion binding"/>
    <property type="evidence" value="ECO:0007669"/>
    <property type="project" value="UniProtKB-UniRule"/>
</dbReference>
<dbReference type="GO" id="GO:0006423">
    <property type="term" value="P:cysteinyl-tRNA aminoacylation"/>
    <property type="evidence" value="ECO:0007669"/>
    <property type="project" value="UniProtKB-UniRule"/>
</dbReference>
<dbReference type="CDD" id="cd00672">
    <property type="entry name" value="CysRS_core"/>
    <property type="match status" value="1"/>
</dbReference>
<dbReference type="FunFam" id="3.40.50.620:FF:000068">
    <property type="entry name" value="Cysteine--tRNA ligase"/>
    <property type="match status" value="1"/>
</dbReference>
<dbReference type="Gene3D" id="1.20.120.640">
    <property type="entry name" value="Anticodon-binding domain of a subclass of class I aminoacyl-tRNA synthetases"/>
    <property type="match status" value="1"/>
</dbReference>
<dbReference type="Gene3D" id="3.40.50.620">
    <property type="entry name" value="HUPs"/>
    <property type="match status" value="1"/>
</dbReference>
<dbReference type="HAMAP" id="MF_00041">
    <property type="entry name" value="Cys_tRNA_synth"/>
    <property type="match status" value="1"/>
</dbReference>
<dbReference type="InterPro" id="IPR015803">
    <property type="entry name" value="Cys-tRNA-ligase"/>
</dbReference>
<dbReference type="InterPro" id="IPR015273">
    <property type="entry name" value="Cys-tRNA-synt_Ia_DALR"/>
</dbReference>
<dbReference type="InterPro" id="IPR024909">
    <property type="entry name" value="Cys-tRNA/MSH_ligase"/>
</dbReference>
<dbReference type="InterPro" id="IPR056411">
    <property type="entry name" value="CysS_C"/>
</dbReference>
<dbReference type="InterPro" id="IPR014729">
    <property type="entry name" value="Rossmann-like_a/b/a_fold"/>
</dbReference>
<dbReference type="InterPro" id="IPR032678">
    <property type="entry name" value="tRNA-synt_1_cat_dom"/>
</dbReference>
<dbReference type="InterPro" id="IPR009080">
    <property type="entry name" value="tRNAsynth_Ia_anticodon-bd"/>
</dbReference>
<dbReference type="NCBIfam" id="TIGR00435">
    <property type="entry name" value="cysS"/>
    <property type="match status" value="1"/>
</dbReference>
<dbReference type="PANTHER" id="PTHR10890:SF3">
    <property type="entry name" value="CYSTEINE--TRNA LIGASE, CYTOPLASMIC"/>
    <property type="match status" value="1"/>
</dbReference>
<dbReference type="PANTHER" id="PTHR10890">
    <property type="entry name" value="CYSTEINYL-TRNA SYNTHETASE"/>
    <property type="match status" value="1"/>
</dbReference>
<dbReference type="Pfam" id="PF23493">
    <property type="entry name" value="CysS_C"/>
    <property type="match status" value="1"/>
</dbReference>
<dbReference type="Pfam" id="PF09190">
    <property type="entry name" value="DALR_2"/>
    <property type="match status" value="1"/>
</dbReference>
<dbReference type="Pfam" id="PF01406">
    <property type="entry name" value="tRNA-synt_1e"/>
    <property type="match status" value="1"/>
</dbReference>
<dbReference type="PRINTS" id="PR00983">
    <property type="entry name" value="TRNASYNTHCYS"/>
</dbReference>
<dbReference type="SUPFAM" id="SSF47323">
    <property type="entry name" value="Anticodon-binding domain of a subclass of class I aminoacyl-tRNA synthetases"/>
    <property type="match status" value="1"/>
</dbReference>
<dbReference type="SUPFAM" id="SSF52374">
    <property type="entry name" value="Nucleotidylyl transferase"/>
    <property type="match status" value="1"/>
</dbReference>
<comment type="catalytic activity">
    <reaction evidence="1">
        <text>tRNA(Cys) + L-cysteine + ATP = L-cysteinyl-tRNA(Cys) + AMP + diphosphate</text>
        <dbReference type="Rhea" id="RHEA:17773"/>
        <dbReference type="Rhea" id="RHEA-COMP:9661"/>
        <dbReference type="Rhea" id="RHEA-COMP:9679"/>
        <dbReference type="ChEBI" id="CHEBI:30616"/>
        <dbReference type="ChEBI" id="CHEBI:33019"/>
        <dbReference type="ChEBI" id="CHEBI:35235"/>
        <dbReference type="ChEBI" id="CHEBI:78442"/>
        <dbReference type="ChEBI" id="CHEBI:78517"/>
        <dbReference type="ChEBI" id="CHEBI:456215"/>
        <dbReference type="EC" id="6.1.1.16"/>
    </reaction>
</comment>
<comment type="cofactor">
    <cofactor evidence="1">
        <name>Zn(2+)</name>
        <dbReference type="ChEBI" id="CHEBI:29105"/>
    </cofactor>
    <text evidence="1">Binds 1 zinc ion per subunit.</text>
</comment>
<comment type="subunit">
    <text evidence="1">Monomer.</text>
</comment>
<comment type="subcellular location">
    <subcellularLocation>
        <location evidence="1">Cytoplasm</location>
    </subcellularLocation>
</comment>
<comment type="similarity">
    <text evidence="1">Belongs to the class-I aminoacyl-tRNA synthetase family.</text>
</comment>
<feature type="chain" id="PRO_1000199078" description="Cysteine--tRNA ligase">
    <location>
        <begin position="1"/>
        <end position="449"/>
    </location>
</feature>
<feature type="short sequence motif" description="'HIGH' region">
    <location>
        <begin position="31"/>
        <end position="41"/>
    </location>
</feature>
<feature type="short sequence motif" description="'KMSKS' region">
    <location>
        <begin position="269"/>
        <end position="273"/>
    </location>
</feature>
<feature type="binding site" evidence="1">
    <location>
        <position position="29"/>
    </location>
    <ligand>
        <name>Zn(2+)</name>
        <dbReference type="ChEBI" id="CHEBI:29105"/>
    </ligand>
</feature>
<feature type="binding site" evidence="1">
    <location>
        <position position="211"/>
    </location>
    <ligand>
        <name>Zn(2+)</name>
        <dbReference type="ChEBI" id="CHEBI:29105"/>
    </ligand>
</feature>
<feature type="binding site" evidence="1">
    <location>
        <position position="236"/>
    </location>
    <ligand>
        <name>Zn(2+)</name>
        <dbReference type="ChEBI" id="CHEBI:29105"/>
    </ligand>
</feature>
<feature type="binding site" evidence="1">
    <location>
        <position position="240"/>
    </location>
    <ligand>
        <name>Zn(2+)</name>
        <dbReference type="ChEBI" id="CHEBI:29105"/>
    </ligand>
</feature>
<feature type="binding site" evidence="1">
    <location>
        <position position="272"/>
    </location>
    <ligand>
        <name>ATP</name>
        <dbReference type="ChEBI" id="CHEBI:30616"/>
    </ligand>
</feature>
<protein>
    <recommendedName>
        <fullName evidence="1">Cysteine--tRNA ligase</fullName>
        <ecNumber evidence="1">6.1.1.16</ecNumber>
    </recommendedName>
    <alternativeName>
        <fullName evidence="1">Cysteinyl-tRNA synthetase</fullName>
        <shortName evidence="1">CysRS</shortName>
    </alternativeName>
</protein>
<reference key="1">
    <citation type="journal article" date="2010" name="J. Bacteriol.">
        <title>Complete genome sequence of the aerobic facultative methanotroph Methylocella silvestris BL2.</title>
        <authorList>
            <person name="Chen Y."/>
            <person name="Crombie A."/>
            <person name="Rahman M.T."/>
            <person name="Dedysh S.N."/>
            <person name="Liesack W."/>
            <person name="Stott M.B."/>
            <person name="Alam M."/>
            <person name="Theisen A.R."/>
            <person name="Murrell J.C."/>
            <person name="Dunfield P.F."/>
        </authorList>
    </citation>
    <scope>NUCLEOTIDE SEQUENCE [LARGE SCALE GENOMIC DNA]</scope>
    <source>
        <strain>DSM 15510 / CIP 108128 / LMG 27833 / NCIMB 13906 / BL2</strain>
    </source>
</reference>
<proteinExistence type="inferred from homology"/>
<gene>
    <name evidence="1" type="primary">cysS</name>
    <name type="ordered locus">Msil_0135</name>
</gene>
<evidence type="ECO:0000255" key="1">
    <source>
        <dbReference type="HAMAP-Rule" id="MF_00041"/>
    </source>
</evidence>
<organism>
    <name type="scientific">Methylocella silvestris (strain DSM 15510 / CIP 108128 / LMG 27833 / NCIMB 13906 / BL2)</name>
    <dbReference type="NCBI Taxonomy" id="395965"/>
    <lineage>
        <taxon>Bacteria</taxon>
        <taxon>Pseudomonadati</taxon>
        <taxon>Pseudomonadota</taxon>
        <taxon>Alphaproteobacteria</taxon>
        <taxon>Hyphomicrobiales</taxon>
        <taxon>Beijerinckiaceae</taxon>
        <taxon>Methylocella</taxon>
    </lineage>
</organism>
<name>SYC_METSB</name>